<evidence type="ECO:0000255" key="1">
    <source>
        <dbReference type="HAMAP-Rule" id="MF_01182"/>
    </source>
</evidence>
<comment type="function">
    <text evidence="1">Catalyzes the reduction of nitrite to ammonia, consuming six electrons in the process.</text>
</comment>
<comment type="catalytic activity">
    <reaction evidence="1">
        <text>6 Fe(III)-[cytochrome c] + NH4(+) + 2 H2O = 6 Fe(II)-[cytochrome c] + nitrite + 8 H(+)</text>
        <dbReference type="Rhea" id="RHEA:13089"/>
        <dbReference type="Rhea" id="RHEA-COMP:10350"/>
        <dbReference type="Rhea" id="RHEA-COMP:14399"/>
        <dbReference type="ChEBI" id="CHEBI:15377"/>
        <dbReference type="ChEBI" id="CHEBI:15378"/>
        <dbReference type="ChEBI" id="CHEBI:16301"/>
        <dbReference type="ChEBI" id="CHEBI:28938"/>
        <dbReference type="ChEBI" id="CHEBI:29033"/>
        <dbReference type="ChEBI" id="CHEBI:29034"/>
        <dbReference type="EC" id="1.7.2.2"/>
    </reaction>
</comment>
<comment type="cofactor">
    <cofactor evidence="1">
        <name>Ca(2+)</name>
        <dbReference type="ChEBI" id="CHEBI:29108"/>
    </cofactor>
    <text evidence="1">Binds 1 Ca(2+) ion per monomer.</text>
</comment>
<comment type="cofactor">
    <cofactor evidence="1">
        <name>heme c</name>
        <dbReference type="ChEBI" id="CHEBI:61717"/>
    </cofactor>
    <text evidence="1">Binds 5 heme c groups covalently per monomer.</text>
</comment>
<comment type="pathway">
    <text evidence="1">Nitrogen metabolism; nitrate reduction (assimilation).</text>
</comment>
<comment type="subcellular location">
    <subcellularLocation>
        <location evidence="1">Periplasm</location>
    </subcellularLocation>
</comment>
<comment type="similarity">
    <text evidence="1">Belongs to the cytochrome c-552 family.</text>
</comment>
<gene>
    <name evidence="1" type="primary">nrfA</name>
    <name type="ordered locus">BF0420</name>
</gene>
<feature type="signal peptide" evidence="1">
    <location>
        <begin position="1"/>
        <end position="25"/>
    </location>
</feature>
<feature type="chain" id="PRO_0000268958" description="Cytochrome c-552">
    <location>
        <begin position="26"/>
        <end position="493"/>
    </location>
</feature>
<feature type="binding site" description="axial binding residue" evidence="1">
    <location>
        <position position="116"/>
    </location>
    <ligand>
        <name>heme c</name>
        <dbReference type="ChEBI" id="CHEBI:61717"/>
        <label>3</label>
    </ligand>
    <ligandPart>
        <name>Fe</name>
        <dbReference type="ChEBI" id="CHEBI:18248"/>
    </ligandPart>
</feature>
<feature type="binding site" description="covalent" evidence="1">
    <location>
        <position position="144"/>
    </location>
    <ligand>
        <name>heme</name>
        <dbReference type="ChEBI" id="CHEBI:30413"/>
        <label>1</label>
    </ligand>
</feature>
<feature type="binding site" description="covalent" evidence="1">
    <location>
        <position position="147"/>
    </location>
    <ligand>
        <name>heme</name>
        <dbReference type="ChEBI" id="CHEBI:30413"/>
        <label>1</label>
    </ligand>
</feature>
<feature type="binding site" description="axial binding residue" evidence="1">
    <location>
        <position position="148"/>
    </location>
    <ligand>
        <name>heme</name>
        <dbReference type="ChEBI" id="CHEBI:30413"/>
        <label>1</label>
    </ligand>
    <ligandPart>
        <name>Fe</name>
        <dbReference type="ChEBI" id="CHEBI:18248"/>
    </ligandPart>
</feature>
<feature type="binding site" description="covalent" evidence="1">
    <location>
        <position position="182"/>
    </location>
    <ligand>
        <name>heme c</name>
        <dbReference type="ChEBI" id="CHEBI:61717"/>
        <label>2</label>
    </ligand>
</feature>
<feature type="binding site" description="covalent" evidence="1">
    <location>
        <position position="185"/>
    </location>
    <ligand>
        <name>heme c</name>
        <dbReference type="ChEBI" id="CHEBI:61717"/>
        <label>2</label>
    </ligand>
</feature>
<feature type="binding site" description="axial binding residue" evidence="1">
    <location>
        <position position="186"/>
    </location>
    <ligand>
        <name>heme c</name>
        <dbReference type="ChEBI" id="CHEBI:61717"/>
        <label>2</label>
    </ligand>
    <ligandPart>
        <name>Fe</name>
        <dbReference type="ChEBI" id="CHEBI:18248"/>
    </ligandPart>
</feature>
<feature type="binding site" description="covalent" evidence="1">
    <location>
        <position position="224"/>
    </location>
    <ligand>
        <name>heme c</name>
        <dbReference type="ChEBI" id="CHEBI:61717"/>
        <label>3</label>
    </ligand>
</feature>
<feature type="binding site" description="covalent" evidence="1">
    <location>
        <position position="227"/>
    </location>
    <ligand>
        <name>heme c</name>
        <dbReference type="ChEBI" id="CHEBI:61717"/>
        <label>3</label>
    </ligand>
</feature>
<feature type="binding site" description="axial binding residue" evidence="1">
    <location>
        <position position="228"/>
    </location>
    <ligand>
        <name>heme c</name>
        <dbReference type="ChEBI" id="CHEBI:61717"/>
        <label>3</label>
    </ligand>
    <ligandPart>
        <name>Fe</name>
        <dbReference type="ChEBI" id="CHEBI:18248"/>
    </ligandPart>
</feature>
<feature type="binding site" evidence="1">
    <location>
        <position position="230"/>
    </location>
    <ligand>
        <name>Ca(2+)</name>
        <dbReference type="ChEBI" id="CHEBI:29108"/>
    </ligand>
</feature>
<feature type="binding site" evidence="1">
    <location>
        <position position="231"/>
    </location>
    <ligand>
        <name>Ca(2+)</name>
        <dbReference type="ChEBI" id="CHEBI:29108"/>
    </ligand>
</feature>
<feature type="binding site" evidence="1">
    <location>
        <position position="231"/>
    </location>
    <ligand>
        <name>substrate</name>
    </ligand>
</feature>
<feature type="binding site" evidence="1">
    <location>
        <position position="276"/>
    </location>
    <ligand>
        <name>Ca(2+)</name>
        <dbReference type="ChEBI" id="CHEBI:29108"/>
    </ligand>
</feature>
<feature type="binding site" evidence="1">
    <location>
        <position position="278"/>
    </location>
    <ligand>
        <name>Ca(2+)</name>
        <dbReference type="ChEBI" id="CHEBI:29108"/>
    </ligand>
</feature>
<feature type="binding site" evidence="1">
    <location>
        <position position="279"/>
    </location>
    <ligand>
        <name>substrate</name>
    </ligand>
</feature>
<feature type="binding site" description="axial binding residue" evidence="1">
    <location>
        <position position="290"/>
    </location>
    <ligand>
        <name>heme c</name>
        <dbReference type="ChEBI" id="CHEBI:61717"/>
        <label>5</label>
    </ligand>
    <ligandPart>
        <name>Fe</name>
        <dbReference type="ChEBI" id="CHEBI:18248"/>
    </ligandPart>
</feature>
<feature type="binding site" description="covalent" evidence="1">
    <location>
        <position position="297"/>
    </location>
    <ligand>
        <name>heme c</name>
        <dbReference type="ChEBI" id="CHEBI:61717"/>
        <label>4</label>
    </ligand>
</feature>
<feature type="binding site" description="covalent" evidence="1">
    <location>
        <position position="300"/>
    </location>
    <ligand>
        <name>heme c</name>
        <dbReference type="ChEBI" id="CHEBI:61717"/>
        <label>4</label>
    </ligand>
</feature>
<feature type="binding site" description="axial binding residue" evidence="1">
    <location>
        <position position="301"/>
    </location>
    <ligand>
        <name>heme c</name>
        <dbReference type="ChEBI" id="CHEBI:61717"/>
        <label>4</label>
    </ligand>
    <ligandPart>
        <name>Fe</name>
        <dbReference type="ChEBI" id="CHEBI:18248"/>
    </ligandPart>
</feature>
<feature type="binding site" description="axial binding residue" evidence="1">
    <location>
        <position position="315"/>
    </location>
    <ligand>
        <name>heme c</name>
        <dbReference type="ChEBI" id="CHEBI:61717"/>
        <label>2</label>
    </ligand>
    <ligandPart>
        <name>Fe</name>
        <dbReference type="ChEBI" id="CHEBI:18248"/>
    </ligandPart>
</feature>
<feature type="binding site" description="covalent" evidence="1">
    <location>
        <position position="328"/>
    </location>
    <ligand>
        <name>heme c</name>
        <dbReference type="ChEBI" id="CHEBI:61717"/>
        <label>5</label>
    </ligand>
</feature>
<feature type="binding site" description="covalent" evidence="1">
    <location>
        <position position="331"/>
    </location>
    <ligand>
        <name>heme c</name>
        <dbReference type="ChEBI" id="CHEBI:61717"/>
        <label>5</label>
    </ligand>
</feature>
<feature type="binding site" description="axial binding residue" evidence="1">
    <location>
        <position position="332"/>
    </location>
    <ligand>
        <name>heme c</name>
        <dbReference type="ChEBI" id="CHEBI:61717"/>
        <label>5</label>
    </ligand>
    <ligandPart>
        <name>Fe</name>
        <dbReference type="ChEBI" id="CHEBI:18248"/>
    </ligandPart>
</feature>
<feature type="binding site" description="axial binding residue" evidence="1">
    <location>
        <position position="407"/>
    </location>
    <ligand>
        <name>heme c</name>
        <dbReference type="ChEBI" id="CHEBI:61717"/>
        <label>4</label>
    </ligand>
    <ligandPart>
        <name>Fe</name>
        <dbReference type="ChEBI" id="CHEBI:18248"/>
    </ligandPart>
</feature>
<dbReference type="EC" id="1.7.2.2" evidence="1"/>
<dbReference type="EMBL" id="AP006841">
    <property type="protein sequence ID" value="BAD47169.1"/>
    <property type="molecule type" value="Genomic_DNA"/>
</dbReference>
<dbReference type="RefSeq" id="WP_011201986.1">
    <property type="nucleotide sequence ID" value="NC_006347.1"/>
</dbReference>
<dbReference type="RefSeq" id="YP_097703.1">
    <property type="nucleotide sequence ID" value="NC_006347.1"/>
</dbReference>
<dbReference type="SMR" id="Q64ZA7"/>
<dbReference type="STRING" id="295405.BF0420"/>
<dbReference type="KEGG" id="bfr:BF0420"/>
<dbReference type="PATRIC" id="fig|295405.11.peg.439"/>
<dbReference type="HOGENOM" id="CLU_035040_1_0_10"/>
<dbReference type="OrthoDB" id="9780421at2"/>
<dbReference type="UniPathway" id="UPA00653"/>
<dbReference type="Proteomes" id="UP000002197">
    <property type="component" value="Chromosome"/>
</dbReference>
<dbReference type="GO" id="GO:0030288">
    <property type="term" value="C:outer membrane-bounded periplasmic space"/>
    <property type="evidence" value="ECO:0007669"/>
    <property type="project" value="TreeGrafter"/>
</dbReference>
<dbReference type="GO" id="GO:0005509">
    <property type="term" value="F:calcium ion binding"/>
    <property type="evidence" value="ECO:0007669"/>
    <property type="project" value="UniProtKB-UniRule"/>
</dbReference>
<dbReference type="GO" id="GO:0020037">
    <property type="term" value="F:heme binding"/>
    <property type="evidence" value="ECO:0007669"/>
    <property type="project" value="InterPro"/>
</dbReference>
<dbReference type="GO" id="GO:0005506">
    <property type="term" value="F:iron ion binding"/>
    <property type="evidence" value="ECO:0007669"/>
    <property type="project" value="UniProtKB-UniRule"/>
</dbReference>
<dbReference type="GO" id="GO:0042279">
    <property type="term" value="F:nitrite reductase (cytochrome, ammonia-forming) activity"/>
    <property type="evidence" value="ECO:0007669"/>
    <property type="project" value="UniProtKB-UniRule"/>
</dbReference>
<dbReference type="GO" id="GO:0019645">
    <property type="term" value="P:anaerobic electron transport chain"/>
    <property type="evidence" value="ECO:0007669"/>
    <property type="project" value="TreeGrafter"/>
</dbReference>
<dbReference type="GO" id="GO:0042128">
    <property type="term" value="P:nitrate assimilation"/>
    <property type="evidence" value="ECO:0007669"/>
    <property type="project" value="UniProtKB-UniRule"/>
</dbReference>
<dbReference type="CDD" id="cd00548">
    <property type="entry name" value="NrfA-like"/>
    <property type="match status" value="1"/>
</dbReference>
<dbReference type="FunFam" id="1.20.140.10:FF:000014">
    <property type="entry name" value="Cytochrome c-552"/>
    <property type="match status" value="1"/>
</dbReference>
<dbReference type="Gene3D" id="1.20.140.10">
    <property type="entry name" value="Butyryl-CoA Dehydrogenase, subunit A, domain 3"/>
    <property type="match status" value="1"/>
</dbReference>
<dbReference type="Gene3D" id="1.10.1130.10">
    <property type="entry name" value="Flavocytochrome C3, Chain A"/>
    <property type="match status" value="1"/>
</dbReference>
<dbReference type="HAMAP" id="MF_01182">
    <property type="entry name" value="Cytochrom_C552"/>
    <property type="match status" value="1"/>
</dbReference>
<dbReference type="InterPro" id="IPR003321">
    <property type="entry name" value="Cyt_c552"/>
</dbReference>
<dbReference type="InterPro" id="IPR017570">
    <property type="entry name" value="Cyt_c_NO2Rdtase_formate-dep"/>
</dbReference>
<dbReference type="InterPro" id="IPR036280">
    <property type="entry name" value="Multihaem_cyt_sf"/>
</dbReference>
<dbReference type="NCBIfam" id="NF008339">
    <property type="entry name" value="PRK11125.1"/>
    <property type="match status" value="1"/>
</dbReference>
<dbReference type="PANTHER" id="PTHR30633:SF0">
    <property type="entry name" value="CYTOCHROME C-552"/>
    <property type="match status" value="1"/>
</dbReference>
<dbReference type="PANTHER" id="PTHR30633">
    <property type="entry name" value="CYTOCHROME C-552 RESPIRATORY NITRITE REDUCTASE"/>
    <property type="match status" value="1"/>
</dbReference>
<dbReference type="Pfam" id="PF02335">
    <property type="entry name" value="Cytochrom_C552"/>
    <property type="match status" value="1"/>
</dbReference>
<dbReference type="PIRSF" id="PIRSF000243">
    <property type="entry name" value="Cyt_c552"/>
    <property type="match status" value="1"/>
</dbReference>
<dbReference type="SUPFAM" id="SSF48695">
    <property type="entry name" value="Multiheme cytochromes"/>
    <property type="match status" value="1"/>
</dbReference>
<dbReference type="PROSITE" id="PS51008">
    <property type="entry name" value="MULTIHEME_CYTC"/>
    <property type="match status" value="1"/>
</dbReference>
<reference key="1">
    <citation type="journal article" date="2004" name="Proc. Natl. Acad. Sci. U.S.A.">
        <title>Genomic analysis of Bacteroides fragilis reveals extensive DNA inversions regulating cell surface adaptation.</title>
        <authorList>
            <person name="Kuwahara T."/>
            <person name="Yamashita A."/>
            <person name="Hirakawa H."/>
            <person name="Nakayama H."/>
            <person name="Toh H."/>
            <person name="Okada N."/>
            <person name="Kuhara S."/>
            <person name="Hattori M."/>
            <person name="Hayashi T."/>
            <person name="Ohnishi Y."/>
        </authorList>
    </citation>
    <scope>NUCLEOTIDE SEQUENCE [LARGE SCALE GENOMIC DNA]</scope>
    <source>
        <strain>YCH46</strain>
    </source>
</reference>
<protein>
    <recommendedName>
        <fullName evidence="1">Cytochrome c-552</fullName>
        <ecNumber evidence="1">1.7.2.2</ecNumber>
    </recommendedName>
    <alternativeName>
        <fullName evidence="1">Ammonia-forming cytochrome c nitrite reductase</fullName>
        <shortName evidence="1">Cytochrome c nitrite reductase</shortName>
    </alternativeName>
</protein>
<name>NRFA_BACFR</name>
<accession>Q64ZA7</accession>
<sequence length="493" mass="56011">MEKKLKSWQGWLLFCGAMAVVFVLGLVVSSLMERRAETVSVFNNKRVEITGIEARNEVFGENYPRQYETWKETAKTDFKSEFNGNEAVDVLEQRPEMVVLWAGYAFSKDYSTPRGHMHAIEDITHSLRTGAPMDDKSGPQPSTCWTCKSPDVPRMMEAIGVDSFYNNKWGAFGSEIVNPIGCADCHEPTNMKLHISRPALREAFARQGKDIDKATPQEMRSLVCAQCHVEYYFKGDGKYLTFPWDKGFSVEDMEAYYDEADFADYTHALSKARILKAQHPDYEISQMGIHAQRGVSCADCHMPYKSEGGMKFSDHHIQSPLAMIDRTCQVCHRESEETLRNNVYDRQRKANEIRGRLEQELAKAHIEAEFAWDKGATDVQMAEALKLIRQAQWRWDFGVASHGGAFHAPQEIQRILGHGLDKALQARLAISKVLAQHGYTADVPMPDISTKEKAQEYIGLDMEKERKAKGKFLKTIVPEWLEKARANGRLAKL</sequence>
<proteinExistence type="inferred from homology"/>
<organism>
    <name type="scientific">Bacteroides fragilis (strain YCH46)</name>
    <dbReference type="NCBI Taxonomy" id="295405"/>
    <lineage>
        <taxon>Bacteria</taxon>
        <taxon>Pseudomonadati</taxon>
        <taxon>Bacteroidota</taxon>
        <taxon>Bacteroidia</taxon>
        <taxon>Bacteroidales</taxon>
        <taxon>Bacteroidaceae</taxon>
        <taxon>Bacteroides</taxon>
    </lineage>
</organism>
<keyword id="KW-0106">Calcium</keyword>
<keyword id="KW-0249">Electron transport</keyword>
<keyword id="KW-0349">Heme</keyword>
<keyword id="KW-0408">Iron</keyword>
<keyword id="KW-0479">Metal-binding</keyword>
<keyword id="KW-0560">Oxidoreductase</keyword>
<keyword id="KW-0574">Periplasm</keyword>
<keyword id="KW-0732">Signal</keyword>
<keyword id="KW-0813">Transport</keyword>